<comment type="subcellular location">
    <subcellularLocation>
        <location>Cytoplasm</location>
    </subcellularLocation>
    <subcellularLocation>
        <location evidence="1">Cell inner membrane</location>
        <topology evidence="1">Peripheral membrane protein</topology>
        <orientation evidence="1">Cytoplasmic side</orientation>
    </subcellularLocation>
</comment>
<comment type="similarity">
    <text evidence="1">Belongs to the HflD family.</text>
</comment>
<reference key="1">
    <citation type="journal article" date="2005" name="Proc. Natl. Acad. Sci. U.S.A.">
        <title>Complete genome sequence of Vibrio fischeri: a symbiotic bacterium with pathogenic congeners.</title>
        <authorList>
            <person name="Ruby E.G."/>
            <person name="Urbanowski M."/>
            <person name="Campbell J."/>
            <person name="Dunn A."/>
            <person name="Faini M."/>
            <person name="Gunsalus R."/>
            <person name="Lostroh P."/>
            <person name="Lupp C."/>
            <person name="McCann J."/>
            <person name="Millikan D."/>
            <person name="Schaefer A."/>
            <person name="Stabb E."/>
            <person name="Stevens A."/>
            <person name="Visick K."/>
            <person name="Whistler C."/>
            <person name="Greenberg E.P."/>
        </authorList>
    </citation>
    <scope>NUCLEOTIDE SEQUENCE [LARGE SCALE GENOMIC DNA]</scope>
    <source>
        <strain>ATCC 700601 / ES114</strain>
    </source>
</reference>
<organism>
    <name type="scientific">Aliivibrio fischeri (strain ATCC 700601 / ES114)</name>
    <name type="common">Vibrio fischeri</name>
    <dbReference type="NCBI Taxonomy" id="312309"/>
    <lineage>
        <taxon>Bacteria</taxon>
        <taxon>Pseudomonadati</taxon>
        <taxon>Pseudomonadota</taxon>
        <taxon>Gammaproteobacteria</taxon>
        <taxon>Vibrionales</taxon>
        <taxon>Vibrionaceae</taxon>
        <taxon>Aliivibrio</taxon>
    </lineage>
</organism>
<evidence type="ECO:0000255" key="1">
    <source>
        <dbReference type="HAMAP-Rule" id="MF_00695"/>
    </source>
</evidence>
<accession>Q5E3W6</accession>
<feature type="chain" id="PRO_1000045451" description="High frequency lysogenization protein HflD homolog">
    <location>
        <begin position="1"/>
        <end position="205"/>
    </location>
</feature>
<name>HFLD_ALIF1</name>
<dbReference type="EMBL" id="CP000020">
    <property type="protein sequence ID" value="AAW86280.1"/>
    <property type="molecule type" value="Genomic_DNA"/>
</dbReference>
<dbReference type="RefSeq" id="WP_011262317.1">
    <property type="nucleotide sequence ID" value="NC_006840.2"/>
</dbReference>
<dbReference type="RefSeq" id="YP_205168.1">
    <property type="nucleotide sequence ID" value="NC_006840.2"/>
</dbReference>
<dbReference type="SMR" id="Q5E3W6"/>
<dbReference type="STRING" id="312309.VF_1785"/>
<dbReference type="EnsemblBacteria" id="AAW86280">
    <property type="protein sequence ID" value="AAW86280"/>
    <property type="gene ID" value="VF_1785"/>
</dbReference>
<dbReference type="GeneID" id="54164485"/>
<dbReference type="KEGG" id="vfi:VF_1785"/>
<dbReference type="PATRIC" id="fig|312309.11.peg.1811"/>
<dbReference type="eggNOG" id="COG2915">
    <property type="taxonomic scope" value="Bacteria"/>
</dbReference>
<dbReference type="HOGENOM" id="CLU_098920_0_0_6"/>
<dbReference type="OrthoDB" id="9788031at2"/>
<dbReference type="Proteomes" id="UP000000537">
    <property type="component" value="Chromosome I"/>
</dbReference>
<dbReference type="GO" id="GO:0005737">
    <property type="term" value="C:cytoplasm"/>
    <property type="evidence" value="ECO:0007669"/>
    <property type="project" value="UniProtKB-SubCell"/>
</dbReference>
<dbReference type="GO" id="GO:0005886">
    <property type="term" value="C:plasma membrane"/>
    <property type="evidence" value="ECO:0007669"/>
    <property type="project" value="UniProtKB-SubCell"/>
</dbReference>
<dbReference type="Gene3D" id="1.10.3890.10">
    <property type="entry name" value="HflD-like"/>
    <property type="match status" value="1"/>
</dbReference>
<dbReference type="HAMAP" id="MF_00695">
    <property type="entry name" value="HflD_protein"/>
    <property type="match status" value="1"/>
</dbReference>
<dbReference type="InterPro" id="IPR007451">
    <property type="entry name" value="HflD"/>
</dbReference>
<dbReference type="InterPro" id="IPR035932">
    <property type="entry name" value="HflD-like_sf"/>
</dbReference>
<dbReference type="NCBIfam" id="NF001246">
    <property type="entry name" value="PRK00218.1-2"/>
    <property type="match status" value="1"/>
</dbReference>
<dbReference type="NCBIfam" id="NF001248">
    <property type="entry name" value="PRK00218.1-4"/>
    <property type="match status" value="1"/>
</dbReference>
<dbReference type="PANTHER" id="PTHR38100">
    <property type="entry name" value="HIGH FREQUENCY LYSOGENIZATION PROTEIN HFLD"/>
    <property type="match status" value="1"/>
</dbReference>
<dbReference type="PANTHER" id="PTHR38100:SF1">
    <property type="entry name" value="HIGH FREQUENCY LYSOGENIZATION PROTEIN HFLD"/>
    <property type="match status" value="1"/>
</dbReference>
<dbReference type="Pfam" id="PF04356">
    <property type="entry name" value="DUF489"/>
    <property type="match status" value="1"/>
</dbReference>
<dbReference type="SUPFAM" id="SSF101322">
    <property type="entry name" value="YcfC-like"/>
    <property type="match status" value="1"/>
</dbReference>
<keyword id="KW-0997">Cell inner membrane</keyword>
<keyword id="KW-1003">Cell membrane</keyword>
<keyword id="KW-0963">Cytoplasm</keyword>
<keyword id="KW-0472">Membrane</keyword>
<keyword id="KW-1185">Reference proteome</keyword>
<sequence length="205" mass="22828">MANTLFDRTIAFAGICQAASLVQKMAKDGHCDQEAFDTAIQSILETNPSNTVAVYGKESNLRIGLECLVRDFDNTPSGSELTRYLISLMALERKLAGHRDGMSKLGERIGTIERQLEHFDIHDEQMLSNIASIYLDVISPMGPRIQVTGTPSVLQQPMTQHKVRALLLSGIRSAVLWRQVGGKRRHLIFGRKKMVEQAKIILAQI</sequence>
<protein>
    <recommendedName>
        <fullName evidence="1">High frequency lysogenization protein HflD homolog</fullName>
    </recommendedName>
</protein>
<proteinExistence type="inferred from homology"/>
<gene>
    <name evidence="1" type="primary">hflD</name>
    <name type="ordered locus">VF_1785</name>
</gene>